<name>PUR4_SCHPO</name>
<organism>
    <name type="scientific">Schizosaccharomyces pombe (strain 972 / ATCC 24843)</name>
    <name type="common">Fission yeast</name>
    <dbReference type="NCBI Taxonomy" id="284812"/>
    <lineage>
        <taxon>Eukaryota</taxon>
        <taxon>Fungi</taxon>
        <taxon>Dikarya</taxon>
        <taxon>Ascomycota</taxon>
        <taxon>Taphrinomycotina</taxon>
        <taxon>Schizosaccharomycetes</taxon>
        <taxon>Schizosaccharomycetales</taxon>
        <taxon>Schizosaccharomycetaceae</taxon>
        <taxon>Schizosaccharomyces</taxon>
    </lineage>
</organism>
<feature type="chain" id="PRO_0000100404" description="Phosphoribosylformylglycinamidine synthase">
    <location>
        <begin position="1"/>
        <end position="1323"/>
    </location>
</feature>
<feature type="domain" description="Glutamine amidotransferase type-1">
    <location>
        <begin position="1062"/>
        <end position="1306"/>
    </location>
</feature>
<feature type="active site" description="Nucleophile" evidence="1">
    <location>
        <position position="1156"/>
    </location>
</feature>
<feature type="active site" evidence="1">
    <location>
        <position position="1284"/>
    </location>
</feature>
<feature type="active site" evidence="1">
    <location>
        <position position="1286"/>
    </location>
</feature>
<feature type="binding site" evidence="2">
    <location>
        <begin position="312"/>
        <end position="323"/>
    </location>
    <ligand>
        <name>ATP</name>
        <dbReference type="ChEBI" id="CHEBI:30616"/>
    </ligand>
</feature>
<feature type="binding site" evidence="1">
    <location>
        <begin position="391"/>
        <end position="393"/>
    </location>
    <ligand>
        <name>ATP</name>
        <dbReference type="ChEBI" id="CHEBI:30616"/>
    </ligand>
</feature>
<feature type="binding site" evidence="1">
    <location>
        <position position="691"/>
    </location>
    <ligand>
        <name>ATP</name>
        <dbReference type="ChEBI" id="CHEBI:30616"/>
    </ligand>
</feature>
<feature type="binding site" evidence="1">
    <location>
        <position position="692"/>
    </location>
    <ligand>
        <name>Mg(2+)</name>
        <dbReference type="ChEBI" id="CHEBI:18420"/>
    </ligand>
</feature>
<feature type="binding site" evidence="1">
    <location>
        <position position="733"/>
    </location>
    <ligand>
        <name>Mg(2+)</name>
        <dbReference type="ChEBI" id="CHEBI:18420"/>
    </ligand>
</feature>
<feature type="binding site" evidence="1">
    <location>
        <position position="737"/>
    </location>
    <ligand>
        <name>Mg(2+)</name>
        <dbReference type="ChEBI" id="CHEBI:18420"/>
    </ligand>
</feature>
<feature type="binding site" evidence="1">
    <location>
        <position position="903"/>
    </location>
    <ligand>
        <name>Mg(2+)</name>
        <dbReference type="ChEBI" id="CHEBI:18420"/>
    </ligand>
</feature>
<feature type="binding site" evidence="1">
    <location>
        <position position="905"/>
    </location>
    <ligand>
        <name>ATP</name>
        <dbReference type="ChEBI" id="CHEBI:30616"/>
    </ligand>
</feature>
<accession>O14228</accession>
<accession>Q9USF2</accession>
<evidence type="ECO:0000250" key="1"/>
<evidence type="ECO:0000255" key="2"/>
<evidence type="ECO:0000269" key="3">
    <source>
    </source>
</evidence>
<evidence type="ECO:0000269" key="4">
    <source>
    </source>
</evidence>
<evidence type="ECO:0000305" key="5"/>
<evidence type="ECO:0000305" key="6">
    <source>
    </source>
</evidence>
<proteinExistence type="evidence at protein level"/>
<sequence>MLVYYGGSALSVQSKKKILELTVSGVSDLNAVYFYLIYTKSNSSLNCESLRPILSDLQESEFKPDGTTMVYVFPRPGTISPWSSKATNIANVCGYKDVIRIERGIAYSVVFKDDISEEMLKSALNHLYDRMTEALRFKLPEEDEVFDKHEPAPLVRIELNCGQGGDKQAATERLNHANKKFGLALAPDEIDYLVECYTSEPSLKSREPTDVELFMFGQVNSEHCRHKIFNADWTIDGEKKDYSLFKMIRNTHLKNPQYTISAYSDNAAVFEGNSGTLFAPVNGIWSMKDEPVEFLGKVETHNHPTAVSPFPGAATGSGGEIRDEGAVGQGSLSKAGLAGYSVSDLNIPGYKQPWELDVGKPYHIATSLDIMLEAPIGSSAFNNEFGRPCINGYFRTFCMEVPRGDGTLEIRGYHKPIMAAGGIGRIRKQHAFKKSIAPGSPIIVLGGPALLVGLGGGAASSMNAGEGSEELDFASVQRGNPEMQRRAQMVIDACTTMDENIIQSIHDVGAGGVSNALPELVHDAGLGARFELRDIPCIEPSMSPMQIWCCESQERYVLSVKSEDLDTFKSICERERCPYGVVGYSTVEQRLILTDRLYNTTPIDLPMEVLFGKPPKMSRVAETQTIPLSKFDSSLKSYLAPSSDPILDAVERVLRMPAVASKSFLITIGDRSVTGLIARDQMVGPWQVPVADVGVTVTSYGKGINTGEALAMGEKPISALVSAAASARMAVAECIMNLVAASIPALDRIRLSANWMAAPSHPGEGAKLYEAVQAIGLELCPSLGISIPVGKDSMSMSMKWNEDGREKSVTAPLSLIITGFSPVDDLYSIWTPQLRKVEDIGSTSLIFIDLANGKQRLGGSILAQSYKQLGDEVPDLDNLDTFKNFINVITQLHKTNYIQAYHDKSDGGLFVTLSEMAFAGHVGIECELDSLSSDNIAALFNEELGAVIQVCDRDIAKVLELFAANGLSTCVHRIGKVLSGQAQTISFSRSGKIIFKSTRSKLHGIWHETSYKMQEIRDNPECARQEMENIADNNDPGLGYHLTFDPNVSVTADLALTSRPKVAILREQGVNGYLEMAYAFYASGFTAVDVHMTDILSGRVHLDDFVGIAACGGFSYGDVLGSGNGWATSILLHEDARNEFYRFFNERKDTFGLGICNGCQLFSRLKSLIPGAKSWPMFTFNESAQYEGRAVMLKIDETSGSKSIFTESMAGSSLPVVVAHGEGRAVFDSESDYEQFKKEGLDLIYYVNNYNERTSRYPFNPNGSRDAIAGVRSPCGRFLAMMPHPERVVLKVANSYYPHSKASEWGVHGPWIRLFQSARKWVG</sequence>
<gene>
    <name type="primary">ade3</name>
    <name type="synonym">min11</name>
    <name type="ORF">SPAC6F12.10c</name>
</gene>
<reference key="1">
    <citation type="journal article" date="2002" name="Nature">
        <title>The genome sequence of Schizosaccharomyces pombe.</title>
        <authorList>
            <person name="Wood V."/>
            <person name="Gwilliam R."/>
            <person name="Rajandream M.A."/>
            <person name="Lyne M.H."/>
            <person name="Lyne R."/>
            <person name="Stewart A."/>
            <person name="Sgouros J.G."/>
            <person name="Peat N."/>
            <person name="Hayles J."/>
            <person name="Baker S.G."/>
            <person name="Basham D."/>
            <person name="Bowman S."/>
            <person name="Brooks K."/>
            <person name="Brown D."/>
            <person name="Brown S."/>
            <person name="Chillingworth T."/>
            <person name="Churcher C.M."/>
            <person name="Collins M."/>
            <person name="Connor R."/>
            <person name="Cronin A."/>
            <person name="Davis P."/>
            <person name="Feltwell T."/>
            <person name="Fraser A."/>
            <person name="Gentles S."/>
            <person name="Goble A."/>
            <person name="Hamlin N."/>
            <person name="Harris D.E."/>
            <person name="Hidalgo J."/>
            <person name="Hodgson G."/>
            <person name="Holroyd S."/>
            <person name="Hornsby T."/>
            <person name="Howarth S."/>
            <person name="Huckle E.J."/>
            <person name="Hunt S."/>
            <person name="Jagels K."/>
            <person name="James K.D."/>
            <person name="Jones L."/>
            <person name="Jones M."/>
            <person name="Leather S."/>
            <person name="McDonald S."/>
            <person name="McLean J."/>
            <person name="Mooney P."/>
            <person name="Moule S."/>
            <person name="Mungall K.L."/>
            <person name="Murphy L.D."/>
            <person name="Niblett D."/>
            <person name="Odell C."/>
            <person name="Oliver K."/>
            <person name="O'Neil S."/>
            <person name="Pearson D."/>
            <person name="Quail M.A."/>
            <person name="Rabbinowitsch E."/>
            <person name="Rutherford K.M."/>
            <person name="Rutter S."/>
            <person name="Saunders D."/>
            <person name="Seeger K."/>
            <person name="Sharp S."/>
            <person name="Skelton J."/>
            <person name="Simmonds M.N."/>
            <person name="Squares R."/>
            <person name="Squares S."/>
            <person name="Stevens K."/>
            <person name="Taylor K."/>
            <person name="Taylor R.G."/>
            <person name="Tivey A."/>
            <person name="Walsh S.V."/>
            <person name="Warren T."/>
            <person name="Whitehead S."/>
            <person name="Woodward J.R."/>
            <person name="Volckaert G."/>
            <person name="Aert R."/>
            <person name="Robben J."/>
            <person name="Grymonprez B."/>
            <person name="Weltjens I."/>
            <person name="Vanstreels E."/>
            <person name="Rieger M."/>
            <person name="Schaefer M."/>
            <person name="Mueller-Auer S."/>
            <person name="Gabel C."/>
            <person name="Fuchs M."/>
            <person name="Duesterhoeft A."/>
            <person name="Fritzc C."/>
            <person name="Holzer E."/>
            <person name="Moestl D."/>
            <person name="Hilbert H."/>
            <person name="Borzym K."/>
            <person name="Langer I."/>
            <person name="Beck A."/>
            <person name="Lehrach H."/>
            <person name="Reinhardt R."/>
            <person name="Pohl T.M."/>
            <person name="Eger P."/>
            <person name="Zimmermann W."/>
            <person name="Wedler H."/>
            <person name="Wambutt R."/>
            <person name="Purnelle B."/>
            <person name="Goffeau A."/>
            <person name="Cadieu E."/>
            <person name="Dreano S."/>
            <person name="Gloux S."/>
            <person name="Lelaure V."/>
            <person name="Mottier S."/>
            <person name="Galibert F."/>
            <person name="Aves S.J."/>
            <person name="Xiang Z."/>
            <person name="Hunt C."/>
            <person name="Moore K."/>
            <person name="Hurst S.M."/>
            <person name="Lucas M."/>
            <person name="Rochet M."/>
            <person name="Gaillardin C."/>
            <person name="Tallada V.A."/>
            <person name="Garzon A."/>
            <person name="Thode G."/>
            <person name="Daga R.R."/>
            <person name="Cruzado L."/>
            <person name="Jimenez J."/>
            <person name="Sanchez M."/>
            <person name="del Rey F."/>
            <person name="Benito J."/>
            <person name="Dominguez A."/>
            <person name="Revuelta J.L."/>
            <person name="Moreno S."/>
            <person name="Armstrong J."/>
            <person name="Forsburg S.L."/>
            <person name="Cerutti L."/>
            <person name="Lowe T."/>
            <person name="McCombie W.R."/>
            <person name="Paulsen I."/>
            <person name="Potashkin J."/>
            <person name="Shpakovski G.V."/>
            <person name="Ussery D."/>
            <person name="Barrell B.G."/>
            <person name="Nurse P."/>
        </authorList>
    </citation>
    <scope>NUCLEOTIDE SEQUENCE [LARGE SCALE GENOMIC DNA]</scope>
    <source>
        <strain>972 / ATCC 24843</strain>
    </source>
</reference>
<reference key="2">
    <citation type="journal article" date="2000" name="Genes Cells">
        <title>Large-scale screening of intracellular protein localization in living fission yeast cells by the use of a GFP-fusion genomic DNA library.</title>
        <authorList>
            <person name="Ding D.-Q."/>
            <person name="Tomita Y."/>
            <person name="Yamamoto A."/>
            <person name="Chikashige Y."/>
            <person name="Haraguchi T."/>
            <person name="Hiraoka Y."/>
        </authorList>
    </citation>
    <scope>NUCLEOTIDE SEQUENCE [LARGE SCALE GENOMIC DNA] OF 925-1122</scope>
    <scope>SUBCELLULAR LOCATION</scope>
    <source>
        <strain>ATCC 38364 / 968</strain>
    </source>
</reference>
<reference key="3">
    <citation type="journal article" date="1976" name="Mol. Gen. Genet.">
        <title>The product of the ade1: gene in Schizosaccharomyces pombe: a bifunctional enzyme catalysing two distinct steps in purine biosynthesis.</title>
        <authorList>
            <person name="Fluri R."/>
            <person name="Coddington A."/>
            <person name="Flury U."/>
        </authorList>
    </citation>
    <scope>FUNCTION</scope>
    <scope>CATALYTIC ACTIVITY</scope>
</reference>
<keyword id="KW-0067">ATP-binding</keyword>
<keyword id="KW-0963">Cytoplasm</keyword>
<keyword id="KW-0315">Glutamine amidotransferase</keyword>
<keyword id="KW-0436">Ligase</keyword>
<keyword id="KW-0460">Magnesium</keyword>
<keyword id="KW-0479">Metal-binding</keyword>
<keyword id="KW-0547">Nucleotide-binding</keyword>
<keyword id="KW-0658">Purine biosynthesis</keyword>
<keyword id="KW-1185">Reference proteome</keyword>
<comment type="function">
    <text evidence="4">Phosphoribosylformylglycinamidine synthase involved in the purines biosynthetic pathway (PubMed:967158). Catalyzes the ATP-dependent conversion of formylglycinamide ribonucleotide (FGAR) and glutamine to yield formylglycinamidine ribonucleotide (FGAM) and glutamate (PubMed:967158).</text>
</comment>
<comment type="catalytic activity">
    <reaction evidence="6">
        <text>N(2)-formyl-N(1)-(5-phospho-beta-D-ribosyl)glycinamide + L-glutamine + ATP + H2O = 2-formamido-N(1)-(5-O-phospho-beta-D-ribosyl)acetamidine + L-glutamate + ADP + phosphate + H(+)</text>
        <dbReference type="Rhea" id="RHEA:17129"/>
        <dbReference type="ChEBI" id="CHEBI:15377"/>
        <dbReference type="ChEBI" id="CHEBI:15378"/>
        <dbReference type="ChEBI" id="CHEBI:29985"/>
        <dbReference type="ChEBI" id="CHEBI:30616"/>
        <dbReference type="ChEBI" id="CHEBI:43474"/>
        <dbReference type="ChEBI" id="CHEBI:58359"/>
        <dbReference type="ChEBI" id="CHEBI:147286"/>
        <dbReference type="ChEBI" id="CHEBI:147287"/>
        <dbReference type="ChEBI" id="CHEBI:456216"/>
        <dbReference type="EC" id="6.3.5.3"/>
    </reaction>
</comment>
<comment type="pathway">
    <text evidence="6">Purine metabolism; IMP biosynthesis via de novo pathway; 5-amino-1-(5-phospho-D-ribosyl)imidazole from N(2)-formyl-N(1)-(5-phospho-D-ribosyl)glycinamide: step 1/2.</text>
</comment>
<comment type="subcellular location">
    <subcellularLocation>
        <location evidence="3">Cytoplasm</location>
    </subcellularLocation>
</comment>
<comment type="similarity">
    <text evidence="5">In the N-terminal section; belongs to the FGAMS family.</text>
</comment>
<protein>
    <recommendedName>
        <fullName>Phosphoribosylformylglycinamidine synthase</fullName>
        <shortName>FGAM synthase</shortName>
        <shortName>FGAMS</shortName>
        <ecNumber evidence="6">6.3.5.3</ecNumber>
    </recommendedName>
    <alternativeName>
        <fullName>Formylglycinamide ribonucleotide amidotransferase</fullName>
        <shortName>FGAR amidotransferase</shortName>
        <shortName>FGAR-AT</shortName>
    </alternativeName>
    <alternativeName>
        <fullName>Formylglycinamide ribotide amidotransferase</fullName>
    </alternativeName>
</protein>
<dbReference type="EC" id="6.3.5.3" evidence="6"/>
<dbReference type="EMBL" id="CU329670">
    <property type="protein sequence ID" value="CAB11094.1"/>
    <property type="molecule type" value="Genomic_DNA"/>
</dbReference>
<dbReference type="EMBL" id="AB027799">
    <property type="protein sequence ID" value="BAA87103.1"/>
    <property type="molecule type" value="Genomic_DNA"/>
</dbReference>
<dbReference type="PIR" id="T11661">
    <property type="entry name" value="T11661"/>
</dbReference>
<dbReference type="RefSeq" id="NP_593296.1">
    <property type="nucleotide sequence ID" value="NM_001018726.2"/>
</dbReference>
<dbReference type="SMR" id="O14228"/>
<dbReference type="BioGRID" id="279316">
    <property type="interactions" value="31"/>
</dbReference>
<dbReference type="FunCoup" id="O14228">
    <property type="interactions" value="967"/>
</dbReference>
<dbReference type="STRING" id="284812.O14228"/>
<dbReference type="iPTMnet" id="O14228"/>
<dbReference type="PaxDb" id="4896-SPAC6F12.10c.1"/>
<dbReference type="EnsemblFungi" id="SPAC6F12.10c.1">
    <property type="protein sequence ID" value="SPAC6F12.10c.1:pep"/>
    <property type="gene ID" value="SPAC6F12.10c"/>
</dbReference>
<dbReference type="GeneID" id="2542871"/>
<dbReference type="KEGG" id="spo:2542871"/>
<dbReference type="PomBase" id="SPAC6F12.10c">
    <property type="gene designation" value="ade3"/>
</dbReference>
<dbReference type="VEuPathDB" id="FungiDB:SPAC6F12.10c"/>
<dbReference type="eggNOG" id="KOG1907">
    <property type="taxonomic scope" value="Eukaryota"/>
</dbReference>
<dbReference type="HOGENOM" id="CLU_001031_0_2_1"/>
<dbReference type="InParanoid" id="O14228"/>
<dbReference type="OMA" id="LSANWMW"/>
<dbReference type="PhylomeDB" id="O14228"/>
<dbReference type="Reactome" id="R-SPO-73817">
    <property type="pathway name" value="Purine ribonucleoside monophosphate biosynthesis"/>
</dbReference>
<dbReference type="UniPathway" id="UPA00074">
    <property type="reaction ID" value="UER00128"/>
</dbReference>
<dbReference type="PRO" id="PR:O14228"/>
<dbReference type="Proteomes" id="UP000002485">
    <property type="component" value="Chromosome I"/>
</dbReference>
<dbReference type="GO" id="GO:0005737">
    <property type="term" value="C:cytoplasm"/>
    <property type="evidence" value="ECO:0007005"/>
    <property type="project" value="PomBase"/>
</dbReference>
<dbReference type="GO" id="GO:0005794">
    <property type="term" value="C:Golgi apparatus"/>
    <property type="evidence" value="ECO:0007005"/>
    <property type="project" value="PomBase"/>
</dbReference>
<dbReference type="GO" id="GO:0005774">
    <property type="term" value="C:vacuolar membrane"/>
    <property type="evidence" value="ECO:0000269"/>
    <property type="project" value="PomBase"/>
</dbReference>
<dbReference type="GO" id="GO:0005524">
    <property type="term" value="F:ATP binding"/>
    <property type="evidence" value="ECO:0007669"/>
    <property type="project" value="UniProtKB-KW"/>
</dbReference>
<dbReference type="GO" id="GO:0046872">
    <property type="term" value="F:metal ion binding"/>
    <property type="evidence" value="ECO:0007669"/>
    <property type="project" value="UniProtKB-KW"/>
</dbReference>
<dbReference type="GO" id="GO:0004642">
    <property type="term" value="F:phosphoribosylformylglycinamidine synthase activity"/>
    <property type="evidence" value="ECO:0000318"/>
    <property type="project" value="GO_Central"/>
</dbReference>
<dbReference type="GO" id="GO:0006189">
    <property type="term" value="P:'de novo' IMP biosynthetic process"/>
    <property type="evidence" value="ECO:0000269"/>
    <property type="project" value="PomBase"/>
</dbReference>
<dbReference type="GO" id="GO:1904262">
    <property type="term" value="P:negative regulation of TORC1 signaling"/>
    <property type="evidence" value="ECO:0000269"/>
    <property type="project" value="PomBase"/>
</dbReference>
<dbReference type="GO" id="GO:0006164">
    <property type="term" value="P:purine nucleotide biosynthetic process"/>
    <property type="evidence" value="ECO:0000318"/>
    <property type="project" value="GO_Central"/>
</dbReference>
<dbReference type="CDD" id="cd01740">
    <property type="entry name" value="GATase1_FGAR_AT"/>
    <property type="match status" value="1"/>
</dbReference>
<dbReference type="CDD" id="cd02203">
    <property type="entry name" value="PurL_repeat1"/>
    <property type="match status" value="1"/>
</dbReference>
<dbReference type="CDD" id="cd02204">
    <property type="entry name" value="PurL_repeat2"/>
    <property type="match status" value="1"/>
</dbReference>
<dbReference type="FunFam" id="3.30.1330.10:FF:000002">
    <property type="entry name" value="Phosphoribosylformylglycinamidine synthase"/>
    <property type="match status" value="1"/>
</dbReference>
<dbReference type="FunFam" id="3.30.1330.10:FF:000005">
    <property type="entry name" value="Phosphoribosylformylglycinamidine synthase"/>
    <property type="match status" value="1"/>
</dbReference>
<dbReference type="FunFam" id="3.40.50.880:FF:000008">
    <property type="entry name" value="Phosphoribosylformylglycinamidine synthase"/>
    <property type="match status" value="1"/>
</dbReference>
<dbReference type="FunFam" id="3.90.650.10:FF:000002">
    <property type="entry name" value="Phosphoribosylformylglycinamidine synthase"/>
    <property type="match status" value="1"/>
</dbReference>
<dbReference type="FunFam" id="3.90.650.10:FF:000005">
    <property type="entry name" value="Phosphoribosylformylglycinamidine synthase"/>
    <property type="match status" value="1"/>
</dbReference>
<dbReference type="Gene3D" id="3.40.50.880">
    <property type="match status" value="1"/>
</dbReference>
<dbReference type="Gene3D" id="1.10.8.750">
    <property type="entry name" value="Phosphoribosylformylglycinamidine synthase, linker domain"/>
    <property type="match status" value="1"/>
</dbReference>
<dbReference type="Gene3D" id="3.90.650.10">
    <property type="entry name" value="PurM-like C-terminal domain"/>
    <property type="match status" value="2"/>
</dbReference>
<dbReference type="Gene3D" id="3.30.1330.10">
    <property type="entry name" value="PurM-like, N-terminal domain"/>
    <property type="match status" value="2"/>
</dbReference>
<dbReference type="HAMAP" id="MF_00419">
    <property type="entry name" value="PurL_1"/>
    <property type="match status" value="1"/>
</dbReference>
<dbReference type="InterPro" id="IPR029062">
    <property type="entry name" value="Class_I_gatase-like"/>
</dbReference>
<dbReference type="InterPro" id="IPR040707">
    <property type="entry name" value="FGAR-AT_N"/>
</dbReference>
<dbReference type="InterPro" id="IPR055181">
    <property type="entry name" value="FGAR-AT_PurM_N-like"/>
</dbReference>
<dbReference type="InterPro" id="IPR010073">
    <property type="entry name" value="PurL_large"/>
</dbReference>
<dbReference type="InterPro" id="IPR041609">
    <property type="entry name" value="PurL_linker"/>
</dbReference>
<dbReference type="InterPro" id="IPR010918">
    <property type="entry name" value="PurM-like_C_dom"/>
</dbReference>
<dbReference type="InterPro" id="IPR036676">
    <property type="entry name" value="PurM-like_C_sf"/>
</dbReference>
<dbReference type="InterPro" id="IPR036921">
    <property type="entry name" value="PurM-like_N_sf"/>
</dbReference>
<dbReference type="InterPro" id="IPR036604">
    <property type="entry name" value="PurS-like_sf"/>
</dbReference>
<dbReference type="NCBIfam" id="TIGR01735">
    <property type="entry name" value="FGAM_synt"/>
    <property type="match status" value="1"/>
</dbReference>
<dbReference type="NCBIfam" id="NF003672">
    <property type="entry name" value="PRK05297.1"/>
    <property type="match status" value="1"/>
</dbReference>
<dbReference type="PANTHER" id="PTHR10099">
    <property type="entry name" value="PHOSPHORIBOSYLFORMYLGLYCINAMIDINE SYNTHASE"/>
    <property type="match status" value="1"/>
</dbReference>
<dbReference type="PANTHER" id="PTHR10099:SF1">
    <property type="entry name" value="PHOSPHORIBOSYLFORMYLGLYCINAMIDINE SYNTHASE"/>
    <property type="match status" value="1"/>
</dbReference>
<dbReference type="Pfam" id="PF02769">
    <property type="entry name" value="AIRS_C"/>
    <property type="match status" value="2"/>
</dbReference>
<dbReference type="Pfam" id="PF18072">
    <property type="entry name" value="FGAR-AT_linker"/>
    <property type="match status" value="1"/>
</dbReference>
<dbReference type="Pfam" id="PF18076">
    <property type="entry name" value="FGAR-AT_N"/>
    <property type="match status" value="1"/>
</dbReference>
<dbReference type="Pfam" id="PF22689">
    <property type="entry name" value="FGAR-AT_PurM_N-like"/>
    <property type="match status" value="1"/>
</dbReference>
<dbReference type="Pfam" id="PF13507">
    <property type="entry name" value="GATase_5"/>
    <property type="match status" value="1"/>
</dbReference>
<dbReference type="SMART" id="SM01211">
    <property type="entry name" value="GATase_5"/>
    <property type="match status" value="1"/>
</dbReference>
<dbReference type="SUPFAM" id="SSF52317">
    <property type="entry name" value="Class I glutamine amidotransferase-like"/>
    <property type="match status" value="1"/>
</dbReference>
<dbReference type="SUPFAM" id="SSF109736">
    <property type="entry name" value="FGAM synthase PurL, linker domain"/>
    <property type="match status" value="1"/>
</dbReference>
<dbReference type="SUPFAM" id="SSF56042">
    <property type="entry name" value="PurM C-terminal domain-like"/>
    <property type="match status" value="2"/>
</dbReference>
<dbReference type="SUPFAM" id="SSF55326">
    <property type="entry name" value="PurM N-terminal domain-like"/>
    <property type="match status" value="2"/>
</dbReference>
<dbReference type="SUPFAM" id="SSF82697">
    <property type="entry name" value="PurS-like"/>
    <property type="match status" value="1"/>
</dbReference>
<dbReference type="PROSITE" id="PS51273">
    <property type="entry name" value="GATASE_TYPE_1"/>
    <property type="match status" value="1"/>
</dbReference>